<protein>
    <recommendedName>
        <fullName evidence="6">Kinesin-like protein KIN-14I</fullName>
    </recommendedName>
</protein>
<reference key="1">
    <citation type="journal article" date="1999" name="Nature">
        <title>Sequence and analysis of chromosome 2 of the plant Arabidopsis thaliana.</title>
        <authorList>
            <person name="Lin X."/>
            <person name="Kaul S."/>
            <person name="Rounsley S.D."/>
            <person name="Shea T.P."/>
            <person name="Benito M.-I."/>
            <person name="Town C.D."/>
            <person name="Fujii C.Y."/>
            <person name="Mason T.M."/>
            <person name="Bowman C.L."/>
            <person name="Barnstead M.E."/>
            <person name="Feldblyum T.V."/>
            <person name="Buell C.R."/>
            <person name="Ketchum K.A."/>
            <person name="Lee J.J."/>
            <person name="Ronning C.M."/>
            <person name="Koo H.L."/>
            <person name="Moffat K.S."/>
            <person name="Cronin L.A."/>
            <person name="Shen M."/>
            <person name="Pai G."/>
            <person name="Van Aken S."/>
            <person name="Umayam L."/>
            <person name="Tallon L.J."/>
            <person name="Gill J.E."/>
            <person name="Adams M.D."/>
            <person name="Carrera A.J."/>
            <person name="Creasy T.H."/>
            <person name="Goodman H.M."/>
            <person name="Somerville C.R."/>
            <person name="Copenhaver G.P."/>
            <person name="Preuss D."/>
            <person name="Nierman W.C."/>
            <person name="White O."/>
            <person name="Eisen J.A."/>
            <person name="Salzberg S.L."/>
            <person name="Fraser C.M."/>
            <person name="Venter J.C."/>
        </authorList>
    </citation>
    <scope>NUCLEOTIDE SEQUENCE [LARGE SCALE GENOMIC DNA]</scope>
    <source>
        <strain>cv. Columbia</strain>
    </source>
</reference>
<reference key="2">
    <citation type="journal article" date="2017" name="Plant J.">
        <title>Araport11: a complete reannotation of the Arabidopsis thaliana reference genome.</title>
        <authorList>
            <person name="Cheng C.Y."/>
            <person name="Krishnakumar V."/>
            <person name="Chan A.P."/>
            <person name="Thibaud-Nissen F."/>
            <person name="Schobel S."/>
            <person name="Town C.D."/>
        </authorList>
    </citation>
    <scope>GENOME REANNOTATION</scope>
    <source>
        <strain>cv. Columbia</strain>
    </source>
</reference>
<reference key="3">
    <citation type="journal article" date="2003" name="Science">
        <title>Empirical analysis of transcriptional activity in the Arabidopsis genome.</title>
        <authorList>
            <person name="Yamada K."/>
            <person name="Lim J."/>
            <person name="Dale J.M."/>
            <person name="Chen H."/>
            <person name="Shinn P."/>
            <person name="Palm C.J."/>
            <person name="Southwick A.M."/>
            <person name="Wu H.C."/>
            <person name="Kim C.J."/>
            <person name="Nguyen M."/>
            <person name="Pham P.K."/>
            <person name="Cheuk R.F."/>
            <person name="Karlin-Newmann G."/>
            <person name="Liu S.X."/>
            <person name="Lam B."/>
            <person name="Sakano H."/>
            <person name="Wu T."/>
            <person name="Yu G."/>
            <person name="Miranda M."/>
            <person name="Quach H.L."/>
            <person name="Tripp M."/>
            <person name="Chang C.H."/>
            <person name="Lee J.M."/>
            <person name="Toriumi M.J."/>
            <person name="Chan M.M."/>
            <person name="Tang C.C."/>
            <person name="Onodera C.S."/>
            <person name="Deng J.M."/>
            <person name="Akiyama K."/>
            <person name="Ansari Y."/>
            <person name="Arakawa T."/>
            <person name="Banh J."/>
            <person name="Banno F."/>
            <person name="Bowser L."/>
            <person name="Brooks S.Y."/>
            <person name="Carninci P."/>
            <person name="Chao Q."/>
            <person name="Choy N."/>
            <person name="Enju A."/>
            <person name="Goldsmith A.D."/>
            <person name="Gurjal M."/>
            <person name="Hansen N.F."/>
            <person name="Hayashizaki Y."/>
            <person name="Johnson-Hopson C."/>
            <person name="Hsuan V.W."/>
            <person name="Iida K."/>
            <person name="Karnes M."/>
            <person name="Khan S."/>
            <person name="Koesema E."/>
            <person name="Ishida J."/>
            <person name="Jiang P.X."/>
            <person name="Jones T."/>
            <person name="Kawai J."/>
            <person name="Kamiya A."/>
            <person name="Meyers C."/>
            <person name="Nakajima M."/>
            <person name="Narusaka M."/>
            <person name="Seki M."/>
            <person name="Sakurai T."/>
            <person name="Satou M."/>
            <person name="Tamse R."/>
            <person name="Vaysberg M."/>
            <person name="Wallender E.K."/>
            <person name="Wong C."/>
            <person name="Yamamura Y."/>
            <person name="Yuan S."/>
            <person name="Shinozaki K."/>
            <person name="Davis R.W."/>
            <person name="Theologis A."/>
            <person name="Ecker J.R."/>
        </authorList>
    </citation>
    <scope>NUCLEOTIDE SEQUENCE [LARGE SCALE MRNA]</scope>
    <source>
        <strain>cv. Columbia</strain>
    </source>
</reference>
<reference key="4">
    <citation type="journal article" date="2001" name="BMC Genomics">
        <title>Kinesins in the Arabidopsis genome: a comparative analysis among eukaryotes.</title>
        <authorList>
            <person name="Reddy A.S."/>
            <person name="Day I.S."/>
        </authorList>
    </citation>
    <scope>GENE FAMILY</scope>
</reference>
<reference key="5">
    <citation type="journal article" date="2006" name="BMC Genomics">
        <title>Comprehensive comparative analysis of kinesins in photosynthetic eukaryotes.</title>
        <authorList>
            <person name="Richardson D.N."/>
            <person name="Simmons M.P."/>
            <person name="Reddy A.S."/>
        </authorList>
    </citation>
    <scope>GENE FAMILY</scope>
    <scope>NOMENCLATURE</scope>
</reference>
<reference key="6">
    <citation type="journal article" date="2012" name="Protoplasma">
        <title>Functions of the Arabidopsis kinesin superfamily of microtubule-based motor proteins.</title>
        <authorList>
            <person name="Zhu C."/>
            <person name="Dixit R."/>
        </authorList>
    </citation>
    <scope>REVIEW</scope>
</reference>
<name>KN14I_ARATH</name>
<keyword id="KW-0067">ATP-binding</keyword>
<keyword id="KW-0175">Coiled coil</keyword>
<keyword id="KW-0493">Microtubule</keyword>
<keyword id="KW-0505">Motor protein</keyword>
<keyword id="KW-0547">Nucleotide-binding</keyword>
<keyword id="KW-1185">Reference proteome</keyword>
<feature type="chain" id="PRO_0000438044" description="Kinesin-like protein KIN-14I">
    <location>
        <begin position="1"/>
        <end position="983"/>
    </location>
</feature>
<feature type="domain" description="Calponin-homology (CH)" evidence="2">
    <location>
        <begin position="44"/>
        <end position="166"/>
    </location>
</feature>
<feature type="domain" description="Kinesin motor" evidence="3">
    <location>
        <begin position="399"/>
        <end position="724"/>
    </location>
</feature>
<feature type="region of interest" description="Disordered" evidence="4">
    <location>
        <begin position="203"/>
        <end position="227"/>
    </location>
</feature>
<feature type="region of interest" description="Disordered" evidence="4">
    <location>
        <begin position="276"/>
        <end position="295"/>
    </location>
</feature>
<feature type="region of interest" description="Disordered" evidence="4">
    <location>
        <begin position="802"/>
        <end position="824"/>
    </location>
</feature>
<feature type="region of interest" description="Disordered" evidence="4">
    <location>
        <begin position="921"/>
        <end position="983"/>
    </location>
</feature>
<feature type="coiled-coil region" evidence="1">
    <location>
        <begin position="731"/>
        <end position="758"/>
    </location>
</feature>
<feature type="compositionally biased region" description="Polar residues" evidence="4">
    <location>
        <begin position="203"/>
        <end position="214"/>
    </location>
</feature>
<feature type="compositionally biased region" description="Polar residues" evidence="4">
    <location>
        <begin position="278"/>
        <end position="287"/>
    </location>
</feature>
<feature type="compositionally biased region" description="Polar residues" evidence="4">
    <location>
        <begin position="939"/>
        <end position="951"/>
    </location>
</feature>
<feature type="binding site" evidence="3">
    <location>
        <begin position="481"/>
        <end position="488"/>
    </location>
    <ligand>
        <name>ATP</name>
        <dbReference type="ChEBI" id="CHEBI:30616"/>
    </ligand>
</feature>
<feature type="sequence conflict" description="In Ref. 3; AAO42115." evidence="6" ref="3">
    <original>H</original>
    <variation>Y</variation>
    <location>
        <position position="774"/>
    </location>
</feature>
<dbReference type="EMBL" id="AC002535">
    <property type="protein sequence ID" value="AAC62860.1"/>
    <property type="status" value="ALT_SEQ"/>
    <property type="molecule type" value="Genomic_DNA"/>
</dbReference>
<dbReference type="EMBL" id="CP002685">
    <property type="protein sequence ID" value="AEC10851.1"/>
    <property type="molecule type" value="Genomic_DNA"/>
</dbReference>
<dbReference type="EMBL" id="BT004088">
    <property type="protein sequence ID" value="AAO42115.1"/>
    <property type="molecule type" value="mRNA"/>
</dbReference>
<dbReference type="PIR" id="T00434">
    <property type="entry name" value="T00434"/>
</dbReference>
<dbReference type="RefSeq" id="NP_850475.2">
    <property type="nucleotide sequence ID" value="NM_180144.4"/>
</dbReference>
<dbReference type="SMR" id="F4IL57"/>
<dbReference type="FunCoup" id="F4IL57">
    <property type="interactions" value="188"/>
</dbReference>
<dbReference type="STRING" id="3702.F4IL57"/>
<dbReference type="iPTMnet" id="F4IL57"/>
<dbReference type="PaxDb" id="3702-AT2G47500.1"/>
<dbReference type="ProteomicsDB" id="250700"/>
<dbReference type="EnsemblPlants" id="AT2G47500.1">
    <property type="protein sequence ID" value="AT2G47500.1"/>
    <property type="gene ID" value="AT2G47500"/>
</dbReference>
<dbReference type="GeneID" id="819363"/>
<dbReference type="Gramene" id="AT2G47500.1">
    <property type="protein sequence ID" value="AT2G47500.1"/>
    <property type="gene ID" value="AT2G47500"/>
</dbReference>
<dbReference type="KEGG" id="ath:AT2G47500"/>
<dbReference type="Araport" id="AT2G47500"/>
<dbReference type="TAIR" id="AT2G47500"/>
<dbReference type="eggNOG" id="KOG0239">
    <property type="taxonomic scope" value="Eukaryota"/>
</dbReference>
<dbReference type="HOGENOM" id="CLU_001485_8_0_1"/>
<dbReference type="InParanoid" id="F4IL57"/>
<dbReference type="PRO" id="PR:F4IL57"/>
<dbReference type="Proteomes" id="UP000006548">
    <property type="component" value="Chromosome 2"/>
</dbReference>
<dbReference type="ExpressionAtlas" id="F4IL57">
    <property type="expression patterns" value="baseline and differential"/>
</dbReference>
<dbReference type="GO" id="GO:0005874">
    <property type="term" value="C:microtubule"/>
    <property type="evidence" value="ECO:0007669"/>
    <property type="project" value="UniProtKB-KW"/>
</dbReference>
<dbReference type="GO" id="GO:0005524">
    <property type="term" value="F:ATP binding"/>
    <property type="evidence" value="ECO:0007669"/>
    <property type="project" value="UniProtKB-KW"/>
</dbReference>
<dbReference type="GO" id="GO:0008017">
    <property type="term" value="F:microtubule binding"/>
    <property type="evidence" value="ECO:0007669"/>
    <property type="project" value="InterPro"/>
</dbReference>
<dbReference type="GO" id="GO:0003777">
    <property type="term" value="F:microtubule motor activity"/>
    <property type="evidence" value="ECO:0007669"/>
    <property type="project" value="InterPro"/>
</dbReference>
<dbReference type="GO" id="GO:0007018">
    <property type="term" value="P:microtubule-based movement"/>
    <property type="evidence" value="ECO:0007669"/>
    <property type="project" value="InterPro"/>
</dbReference>
<dbReference type="CDD" id="cd21203">
    <property type="entry name" value="CH_AtKIN14-like"/>
    <property type="match status" value="1"/>
</dbReference>
<dbReference type="CDD" id="cd01366">
    <property type="entry name" value="KISc_C_terminal"/>
    <property type="match status" value="1"/>
</dbReference>
<dbReference type="FunFam" id="1.10.418.10:FF:000062">
    <property type="entry name" value="Kinesin-like protein KIN-14I isoform A"/>
    <property type="match status" value="1"/>
</dbReference>
<dbReference type="FunFam" id="3.40.850.10:FF:000045">
    <property type="entry name" value="Kinesin-like protein KIN-14I isoform A"/>
    <property type="match status" value="1"/>
</dbReference>
<dbReference type="Gene3D" id="1.10.418.10">
    <property type="entry name" value="Calponin-like domain"/>
    <property type="match status" value="1"/>
</dbReference>
<dbReference type="Gene3D" id="3.40.850.10">
    <property type="entry name" value="Kinesin motor domain"/>
    <property type="match status" value="1"/>
</dbReference>
<dbReference type="InterPro" id="IPR001715">
    <property type="entry name" value="CH_dom"/>
</dbReference>
<dbReference type="InterPro" id="IPR036872">
    <property type="entry name" value="CH_dom_sf"/>
</dbReference>
<dbReference type="InterPro" id="IPR027640">
    <property type="entry name" value="Kinesin-like_fam"/>
</dbReference>
<dbReference type="InterPro" id="IPR001752">
    <property type="entry name" value="Kinesin_motor_dom"/>
</dbReference>
<dbReference type="InterPro" id="IPR036961">
    <property type="entry name" value="Kinesin_motor_dom_sf"/>
</dbReference>
<dbReference type="InterPro" id="IPR027417">
    <property type="entry name" value="P-loop_NTPase"/>
</dbReference>
<dbReference type="PANTHER" id="PTHR47972:SF39">
    <property type="entry name" value="KINESIN-LIKE PROTEIN KIN-14I"/>
    <property type="match status" value="1"/>
</dbReference>
<dbReference type="PANTHER" id="PTHR47972">
    <property type="entry name" value="KINESIN-LIKE PROTEIN KLP-3"/>
    <property type="match status" value="1"/>
</dbReference>
<dbReference type="Pfam" id="PF00307">
    <property type="entry name" value="CH"/>
    <property type="match status" value="1"/>
</dbReference>
<dbReference type="Pfam" id="PF00225">
    <property type="entry name" value="Kinesin"/>
    <property type="match status" value="1"/>
</dbReference>
<dbReference type="PRINTS" id="PR00380">
    <property type="entry name" value="KINESINHEAVY"/>
</dbReference>
<dbReference type="SMART" id="SM00033">
    <property type="entry name" value="CH"/>
    <property type="match status" value="1"/>
</dbReference>
<dbReference type="SMART" id="SM00129">
    <property type="entry name" value="KISc"/>
    <property type="match status" value="1"/>
</dbReference>
<dbReference type="SUPFAM" id="SSF47576">
    <property type="entry name" value="Calponin-homology domain, CH-domain"/>
    <property type="match status" value="1"/>
</dbReference>
<dbReference type="SUPFAM" id="SSF52540">
    <property type="entry name" value="P-loop containing nucleoside triphosphate hydrolases"/>
    <property type="match status" value="1"/>
</dbReference>
<dbReference type="PROSITE" id="PS50021">
    <property type="entry name" value="CH"/>
    <property type="match status" value="1"/>
</dbReference>
<dbReference type="PROSITE" id="PS50067">
    <property type="entry name" value="KINESIN_MOTOR_2"/>
    <property type="match status" value="1"/>
</dbReference>
<comment type="similarity">
    <text evidence="5">Belongs to the TRAFAC class myosin-kinesin ATPase superfamily. Kinesin family. KIN-14 subfamily.</text>
</comment>
<comment type="sequence caution" evidence="6">
    <conflict type="erroneous gene model prediction">
        <sequence resource="EMBL-CDS" id="AAC62860"/>
    </conflict>
</comment>
<evidence type="ECO:0000255" key="1"/>
<evidence type="ECO:0000255" key="2">
    <source>
        <dbReference type="PROSITE-ProRule" id="PRU00044"/>
    </source>
</evidence>
<evidence type="ECO:0000255" key="3">
    <source>
        <dbReference type="PROSITE-ProRule" id="PRU00283"/>
    </source>
</evidence>
<evidence type="ECO:0000256" key="4">
    <source>
        <dbReference type="SAM" id="MobiDB-lite"/>
    </source>
</evidence>
<evidence type="ECO:0000303" key="5">
    <source>
    </source>
</evidence>
<evidence type="ECO:0000305" key="6"/>
<evidence type="ECO:0000312" key="7">
    <source>
        <dbReference type="Araport" id="AT2G47500"/>
    </source>
</evidence>
<evidence type="ECO:0000312" key="8">
    <source>
        <dbReference type="EMBL" id="AAC62860.1"/>
    </source>
</evidence>
<proteinExistence type="evidence at transcript level"/>
<sequence length="983" mass="108779">MAATATEDGGLSFTVASVMEDVLQQHGNGLRDHDLVSRRAEEAASRRYEAANWLRRMVGVVGAKDLPAEPTEEGLRLGLRSGIILCKVLNKVQPGAVSKVVESPCDAILVADGAPLSAFQYFENVRNFLVAIQEMGFPTFEASDLEQGGNASRVVNCVLAIKSYDEWKQSGGIGVWKFGGNIKPPALGKSSFVRKNSEPFMNSLSRTSSINNEKAPSENDSNKLSSPSSLSTLVRAVLSDKKPEDVPKLIESLLSKVVEEFENRVTNQYELVRAAPRESTSSQNNRSFLKPLGEREREEKSFKAIKKDDHNSQILDEKMKTRQFKQLTIFNQQQEDIEGLRQTLYTTRAGMQFMQKKFQEEFSSLGMHVHGLAHAASGYHRVLEENRKLYNQVQDLKGSIRVYCRVRPFLPGQSSFSSTIGNMEDDTIGINTASRHGKSLKSFTFNKVFGPSATQEEVFSDMQPLIRSVLDGYNVCIFAYGQTGSGKTFTMSGPRDLTEKSQGVNYRALGDLFLLAEQRKDTFRYDIAVQMIEIYNEQVRDLLVTDGSNKRLEIRNSSQKGLSVPDASLVPVSSTFDVIDLMKTGHKNRAVGSTALNDRSSRSHSCLTVHVQGRDLTSGAVLRGCMHLVDLAGSERVDKSEVTGDRLKEAQHINRSLSALGDVIASLAHKNPHVPYRNSKLTQLLQDSLGGQAKTLMFVHISPEADAVGETISTLKFAERVATVELGAARVNNDTSDVKELKEQIATLKAALARKEAESQQNNILKTPGGSEKHKAKTGEVEIHNNNIMTKKSESCEVEEITVNSPPWPPVASPGQAYREDDRSFGSSEWVDKVMVNNRQDEMRRVESLWGGATTENGIGILPEDFYRRDLASDTSRIFSEHSYNIFMGNNNSTDDLDAATSDSSEPDLLWQFNQSTKIPTRSNIESKLKKPVSKPIRSPQSRNNSNNTVSRPLASQKVGNGPRGMKQFGPADMKRKATNARH</sequence>
<gene>
    <name evidence="6" type="primary">KIN14I</name>
    <name evidence="7" type="ordered locus">At2g47500</name>
    <name evidence="8" type="ORF">T30B22.20</name>
</gene>
<accession>F4IL57</accession>
<accession>O22260</accession>
<accession>Q84W97</accession>
<organism>
    <name type="scientific">Arabidopsis thaliana</name>
    <name type="common">Mouse-ear cress</name>
    <dbReference type="NCBI Taxonomy" id="3702"/>
    <lineage>
        <taxon>Eukaryota</taxon>
        <taxon>Viridiplantae</taxon>
        <taxon>Streptophyta</taxon>
        <taxon>Embryophyta</taxon>
        <taxon>Tracheophyta</taxon>
        <taxon>Spermatophyta</taxon>
        <taxon>Magnoliopsida</taxon>
        <taxon>eudicotyledons</taxon>
        <taxon>Gunneridae</taxon>
        <taxon>Pentapetalae</taxon>
        <taxon>rosids</taxon>
        <taxon>malvids</taxon>
        <taxon>Brassicales</taxon>
        <taxon>Brassicaceae</taxon>
        <taxon>Camelineae</taxon>
        <taxon>Arabidopsis</taxon>
    </lineage>
</organism>